<feature type="chain" id="PRO_1000000381" description="Argininosuccinate synthase">
    <location>
        <begin position="1"/>
        <end position="409"/>
    </location>
</feature>
<feature type="binding site" evidence="1">
    <location>
        <begin position="10"/>
        <end position="18"/>
    </location>
    <ligand>
        <name>ATP</name>
        <dbReference type="ChEBI" id="CHEBI:30616"/>
    </ligand>
</feature>
<feature type="binding site" evidence="1">
    <location>
        <position position="37"/>
    </location>
    <ligand>
        <name>ATP</name>
        <dbReference type="ChEBI" id="CHEBI:30616"/>
    </ligand>
</feature>
<feature type="binding site" evidence="1">
    <location>
        <position position="90"/>
    </location>
    <ligand>
        <name>L-citrulline</name>
        <dbReference type="ChEBI" id="CHEBI:57743"/>
    </ligand>
</feature>
<feature type="binding site" evidence="1">
    <location>
        <position position="95"/>
    </location>
    <ligand>
        <name>L-citrulline</name>
        <dbReference type="ChEBI" id="CHEBI:57743"/>
    </ligand>
</feature>
<feature type="binding site" evidence="1">
    <location>
        <position position="120"/>
    </location>
    <ligand>
        <name>ATP</name>
        <dbReference type="ChEBI" id="CHEBI:30616"/>
    </ligand>
</feature>
<feature type="binding site" evidence="1">
    <location>
        <position position="122"/>
    </location>
    <ligand>
        <name>L-aspartate</name>
        <dbReference type="ChEBI" id="CHEBI:29991"/>
    </ligand>
</feature>
<feature type="binding site" evidence="1">
    <location>
        <position position="126"/>
    </location>
    <ligand>
        <name>L-aspartate</name>
        <dbReference type="ChEBI" id="CHEBI:29991"/>
    </ligand>
</feature>
<feature type="binding site" evidence="1">
    <location>
        <position position="126"/>
    </location>
    <ligand>
        <name>L-citrulline</name>
        <dbReference type="ChEBI" id="CHEBI:57743"/>
    </ligand>
</feature>
<feature type="binding site" evidence="1">
    <location>
        <position position="127"/>
    </location>
    <ligand>
        <name>L-aspartate</name>
        <dbReference type="ChEBI" id="CHEBI:29991"/>
    </ligand>
</feature>
<feature type="binding site" evidence="1">
    <location>
        <position position="130"/>
    </location>
    <ligand>
        <name>L-citrulline</name>
        <dbReference type="ChEBI" id="CHEBI:57743"/>
    </ligand>
</feature>
<feature type="binding site" evidence="1">
    <location>
        <position position="182"/>
    </location>
    <ligand>
        <name>L-citrulline</name>
        <dbReference type="ChEBI" id="CHEBI:57743"/>
    </ligand>
</feature>
<feature type="binding site" evidence="1">
    <location>
        <position position="191"/>
    </location>
    <ligand>
        <name>L-citrulline</name>
        <dbReference type="ChEBI" id="CHEBI:57743"/>
    </ligand>
</feature>
<feature type="binding site" evidence="1">
    <location>
        <position position="267"/>
    </location>
    <ligand>
        <name>L-citrulline</name>
        <dbReference type="ChEBI" id="CHEBI:57743"/>
    </ligand>
</feature>
<feature type="binding site" evidence="1">
    <location>
        <position position="279"/>
    </location>
    <ligand>
        <name>L-citrulline</name>
        <dbReference type="ChEBI" id="CHEBI:57743"/>
    </ligand>
</feature>
<sequence length="409" mass="46055">MSDVKKVVLAYSGGLDTSVILKWLQDTYQCEVVTFTADLGQGEELEPARQKALKFGIKPENIFIDDLREEFVRDFVFPMFRANTIYEGEYLLGTSIARPLIAKRQIEIARATGADAVSHGATGKGNDQVRFELGYYALMPGVKVIAPWREWDLLSREKLLAYAEKHGIPIEMKHKQGGSPYSMDANLLHISFEGRHLENPAAEAEESMWRWTVSPEAAPDAAEYVDLEFEKGDLVAINGQRLKAHELLAKLNELGGKHGIGRLDLVENRYVGMKSRGCYETPGGTILLRAHRAIESITLDREVAHLKDDLMPRYASMIYNGYWWSPERQALQALVDHTQQTVNGWVRIKLYKGNVIVVARDSKTDSLFDPTIATFEDDQGAYNQKDAHGFIRLNALRMRIAANAKTKRG</sequence>
<comment type="catalytic activity">
    <reaction evidence="1">
        <text>L-citrulline + L-aspartate + ATP = 2-(N(omega)-L-arginino)succinate + AMP + diphosphate + H(+)</text>
        <dbReference type="Rhea" id="RHEA:10932"/>
        <dbReference type="ChEBI" id="CHEBI:15378"/>
        <dbReference type="ChEBI" id="CHEBI:29991"/>
        <dbReference type="ChEBI" id="CHEBI:30616"/>
        <dbReference type="ChEBI" id="CHEBI:33019"/>
        <dbReference type="ChEBI" id="CHEBI:57472"/>
        <dbReference type="ChEBI" id="CHEBI:57743"/>
        <dbReference type="ChEBI" id="CHEBI:456215"/>
        <dbReference type="EC" id="6.3.4.5"/>
    </reaction>
</comment>
<comment type="pathway">
    <text evidence="1">Amino-acid biosynthesis; L-arginine biosynthesis; L-arginine from L-ornithine and carbamoyl phosphate: step 2/3.</text>
</comment>
<comment type="subunit">
    <text evidence="1">Homotetramer.</text>
</comment>
<comment type="subcellular location">
    <subcellularLocation>
        <location evidence="1">Cytoplasm</location>
    </subcellularLocation>
</comment>
<comment type="similarity">
    <text evidence="1">Belongs to the argininosuccinate synthase family. Type 1 subfamily.</text>
</comment>
<proteinExistence type="inferred from homology"/>
<dbReference type="EC" id="6.3.4.5" evidence="1"/>
<dbReference type="EMBL" id="AM406670">
    <property type="protein sequence ID" value="CAL94803.1"/>
    <property type="molecule type" value="Genomic_DNA"/>
</dbReference>
<dbReference type="RefSeq" id="WP_011765917.1">
    <property type="nucleotide sequence ID" value="NC_008702.1"/>
</dbReference>
<dbReference type="SMR" id="A1K7J8"/>
<dbReference type="STRING" id="62928.azo2186"/>
<dbReference type="KEGG" id="aoa:dqs_2319"/>
<dbReference type="KEGG" id="azo:azo2186"/>
<dbReference type="eggNOG" id="COG0137">
    <property type="taxonomic scope" value="Bacteria"/>
</dbReference>
<dbReference type="HOGENOM" id="CLU_032784_4_2_4"/>
<dbReference type="OrthoDB" id="9801641at2"/>
<dbReference type="UniPathway" id="UPA00068">
    <property type="reaction ID" value="UER00113"/>
</dbReference>
<dbReference type="Proteomes" id="UP000002588">
    <property type="component" value="Chromosome"/>
</dbReference>
<dbReference type="GO" id="GO:0005737">
    <property type="term" value="C:cytoplasm"/>
    <property type="evidence" value="ECO:0007669"/>
    <property type="project" value="UniProtKB-SubCell"/>
</dbReference>
<dbReference type="GO" id="GO:0004055">
    <property type="term" value="F:argininosuccinate synthase activity"/>
    <property type="evidence" value="ECO:0007669"/>
    <property type="project" value="UniProtKB-UniRule"/>
</dbReference>
<dbReference type="GO" id="GO:0005524">
    <property type="term" value="F:ATP binding"/>
    <property type="evidence" value="ECO:0007669"/>
    <property type="project" value="UniProtKB-UniRule"/>
</dbReference>
<dbReference type="GO" id="GO:0000053">
    <property type="term" value="P:argininosuccinate metabolic process"/>
    <property type="evidence" value="ECO:0007669"/>
    <property type="project" value="TreeGrafter"/>
</dbReference>
<dbReference type="GO" id="GO:0006526">
    <property type="term" value="P:L-arginine biosynthetic process"/>
    <property type="evidence" value="ECO:0007669"/>
    <property type="project" value="UniProtKB-UniRule"/>
</dbReference>
<dbReference type="GO" id="GO:0000050">
    <property type="term" value="P:urea cycle"/>
    <property type="evidence" value="ECO:0007669"/>
    <property type="project" value="TreeGrafter"/>
</dbReference>
<dbReference type="CDD" id="cd01999">
    <property type="entry name" value="ASS"/>
    <property type="match status" value="1"/>
</dbReference>
<dbReference type="FunFam" id="3.40.50.620:FF:000019">
    <property type="entry name" value="Argininosuccinate synthase"/>
    <property type="match status" value="1"/>
</dbReference>
<dbReference type="FunFam" id="3.90.1260.10:FF:000007">
    <property type="entry name" value="Argininosuccinate synthase"/>
    <property type="match status" value="1"/>
</dbReference>
<dbReference type="Gene3D" id="3.90.1260.10">
    <property type="entry name" value="Argininosuccinate synthetase, chain A, domain 2"/>
    <property type="match status" value="1"/>
</dbReference>
<dbReference type="Gene3D" id="3.40.50.620">
    <property type="entry name" value="HUPs"/>
    <property type="match status" value="1"/>
</dbReference>
<dbReference type="Gene3D" id="1.20.5.470">
    <property type="entry name" value="Single helix bin"/>
    <property type="match status" value="1"/>
</dbReference>
<dbReference type="HAMAP" id="MF_00005">
    <property type="entry name" value="Arg_succ_synth_type1"/>
    <property type="match status" value="1"/>
</dbReference>
<dbReference type="InterPro" id="IPR048268">
    <property type="entry name" value="Arginosuc_syn_C"/>
</dbReference>
<dbReference type="InterPro" id="IPR048267">
    <property type="entry name" value="Arginosuc_syn_N"/>
</dbReference>
<dbReference type="InterPro" id="IPR001518">
    <property type="entry name" value="Arginosuc_synth"/>
</dbReference>
<dbReference type="InterPro" id="IPR018223">
    <property type="entry name" value="Arginosuc_synth_CS"/>
</dbReference>
<dbReference type="InterPro" id="IPR023434">
    <property type="entry name" value="Arginosuc_synth_type_1_subfam"/>
</dbReference>
<dbReference type="InterPro" id="IPR024074">
    <property type="entry name" value="AS_cat/multimer_dom_body"/>
</dbReference>
<dbReference type="InterPro" id="IPR014729">
    <property type="entry name" value="Rossmann-like_a/b/a_fold"/>
</dbReference>
<dbReference type="NCBIfam" id="TIGR00032">
    <property type="entry name" value="argG"/>
    <property type="match status" value="1"/>
</dbReference>
<dbReference type="NCBIfam" id="NF001770">
    <property type="entry name" value="PRK00509.1"/>
    <property type="match status" value="1"/>
</dbReference>
<dbReference type="PANTHER" id="PTHR11587">
    <property type="entry name" value="ARGININOSUCCINATE SYNTHASE"/>
    <property type="match status" value="1"/>
</dbReference>
<dbReference type="PANTHER" id="PTHR11587:SF2">
    <property type="entry name" value="ARGININOSUCCINATE SYNTHASE"/>
    <property type="match status" value="1"/>
</dbReference>
<dbReference type="Pfam" id="PF20979">
    <property type="entry name" value="Arginosuc_syn_C"/>
    <property type="match status" value="1"/>
</dbReference>
<dbReference type="Pfam" id="PF00764">
    <property type="entry name" value="Arginosuc_synth"/>
    <property type="match status" value="1"/>
</dbReference>
<dbReference type="SUPFAM" id="SSF52402">
    <property type="entry name" value="Adenine nucleotide alpha hydrolases-like"/>
    <property type="match status" value="1"/>
</dbReference>
<dbReference type="SUPFAM" id="SSF69864">
    <property type="entry name" value="Argininosuccinate synthetase, C-terminal domain"/>
    <property type="match status" value="1"/>
</dbReference>
<dbReference type="PROSITE" id="PS00564">
    <property type="entry name" value="ARGININOSUCCIN_SYN_1"/>
    <property type="match status" value="1"/>
</dbReference>
<dbReference type="PROSITE" id="PS00565">
    <property type="entry name" value="ARGININOSUCCIN_SYN_2"/>
    <property type="match status" value="1"/>
</dbReference>
<keyword id="KW-0028">Amino-acid biosynthesis</keyword>
<keyword id="KW-0055">Arginine biosynthesis</keyword>
<keyword id="KW-0067">ATP-binding</keyword>
<keyword id="KW-0963">Cytoplasm</keyword>
<keyword id="KW-0436">Ligase</keyword>
<keyword id="KW-0547">Nucleotide-binding</keyword>
<keyword id="KW-1185">Reference proteome</keyword>
<reference key="1">
    <citation type="journal article" date="2006" name="Nat. Biotechnol.">
        <title>Complete genome of the mutualistic, N2-fixing grass endophyte Azoarcus sp. strain BH72.</title>
        <authorList>
            <person name="Krause A."/>
            <person name="Ramakumar A."/>
            <person name="Bartels D."/>
            <person name="Battistoni F."/>
            <person name="Bekel T."/>
            <person name="Boch J."/>
            <person name="Boehm M."/>
            <person name="Friedrich F."/>
            <person name="Hurek T."/>
            <person name="Krause L."/>
            <person name="Linke B."/>
            <person name="McHardy A.C."/>
            <person name="Sarkar A."/>
            <person name="Schneiker S."/>
            <person name="Syed A.A."/>
            <person name="Thauer R."/>
            <person name="Vorhoelter F.-J."/>
            <person name="Weidner S."/>
            <person name="Puehler A."/>
            <person name="Reinhold-Hurek B."/>
            <person name="Kaiser O."/>
            <person name="Goesmann A."/>
        </authorList>
    </citation>
    <scope>NUCLEOTIDE SEQUENCE [LARGE SCALE GENOMIC DNA]</scope>
    <source>
        <strain>BH72</strain>
    </source>
</reference>
<protein>
    <recommendedName>
        <fullName evidence="1">Argininosuccinate synthase</fullName>
        <ecNumber evidence="1">6.3.4.5</ecNumber>
    </recommendedName>
    <alternativeName>
        <fullName evidence="1">Citrulline--aspartate ligase</fullName>
    </alternativeName>
</protein>
<evidence type="ECO:0000255" key="1">
    <source>
        <dbReference type="HAMAP-Rule" id="MF_00005"/>
    </source>
</evidence>
<gene>
    <name evidence="1" type="primary">argG</name>
    <name type="ordered locus">azo2186</name>
</gene>
<name>ASSY_AZOSB</name>
<organism>
    <name type="scientific">Azoarcus sp. (strain BH72)</name>
    <dbReference type="NCBI Taxonomy" id="418699"/>
    <lineage>
        <taxon>Bacteria</taxon>
        <taxon>Pseudomonadati</taxon>
        <taxon>Pseudomonadota</taxon>
        <taxon>Betaproteobacteria</taxon>
        <taxon>Rhodocyclales</taxon>
        <taxon>Zoogloeaceae</taxon>
        <taxon>Azoarcus</taxon>
    </lineage>
</organism>
<accession>A1K7J8</accession>